<sequence length="204" mass="22664">MAYSIEEEQEINQLKDWWKENGKTIIVAFILGVGGMFGWRYWQTHQAEQIAQASAQYDTLINSVQQDEQAKKANIEQFVQANSKTAYAVFALLDEAKKATEKQDFSAAEANLNQALTQSQDEVLTSIVALRLSAVQFQLGQLDNALSTLNQVKGESFNARKAILTGDIQVAKGDKVAAKNSFEQAQQSGSQLEQQMAKMKLNNL</sequence>
<organism>
    <name type="scientific">Haemophilus influenzae (strain ATCC 51907 / DSM 11121 / KW20 / Rd)</name>
    <dbReference type="NCBI Taxonomy" id="71421"/>
    <lineage>
        <taxon>Bacteria</taxon>
        <taxon>Pseudomonadati</taxon>
        <taxon>Pseudomonadota</taxon>
        <taxon>Gammaproteobacteria</taxon>
        <taxon>Pasteurellales</taxon>
        <taxon>Pasteurellaceae</taxon>
        <taxon>Haemophilus</taxon>
    </lineage>
</organism>
<feature type="chain" id="PRO_0000214365" description="Ancillary SecYEG translocon subunit">
    <location>
        <begin position="1"/>
        <end position="204"/>
    </location>
</feature>
<feature type="topological domain" description="Cytoplasmic" evidence="1">
    <location>
        <begin position="1"/>
        <end position="23"/>
    </location>
</feature>
<feature type="transmembrane region" description="Helical" evidence="2">
    <location>
        <begin position="24"/>
        <end position="42"/>
    </location>
</feature>
<feature type="topological domain" description="Periplasmic" evidence="1">
    <location>
        <begin position="43"/>
        <end position="204"/>
    </location>
</feature>
<gene>
    <name type="ordered locus">HI_0370</name>
</gene>
<evidence type="ECO:0000250" key="1">
    <source>
        <dbReference type="UniProtKB" id="P76576"/>
    </source>
</evidence>
<evidence type="ECO:0000255" key="2"/>
<evidence type="ECO:0000305" key="3"/>
<keyword id="KW-0997">Cell inner membrane</keyword>
<keyword id="KW-1003">Cell membrane</keyword>
<keyword id="KW-0143">Chaperone</keyword>
<keyword id="KW-0472">Membrane</keyword>
<keyword id="KW-1185">Reference proteome</keyword>
<keyword id="KW-0812">Transmembrane</keyword>
<keyword id="KW-1133">Transmembrane helix</keyword>
<accession>P43989</accession>
<reference key="1">
    <citation type="journal article" date="1995" name="Science">
        <title>Whole-genome random sequencing and assembly of Haemophilus influenzae Rd.</title>
        <authorList>
            <person name="Fleischmann R.D."/>
            <person name="Adams M.D."/>
            <person name="White O."/>
            <person name="Clayton R.A."/>
            <person name="Kirkness E.F."/>
            <person name="Kerlavage A.R."/>
            <person name="Bult C.J."/>
            <person name="Tomb J.-F."/>
            <person name="Dougherty B.A."/>
            <person name="Merrick J.M."/>
            <person name="McKenney K."/>
            <person name="Sutton G.G."/>
            <person name="FitzHugh W."/>
            <person name="Fields C.A."/>
            <person name="Gocayne J.D."/>
            <person name="Scott J.D."/>
            <person name="Shirley R."/>
            <person name="Liu L.-I."/>
            <person name="Glodek A."/>
            <person name="Kelley J.M."/>
            <person name="Weidman J.F."/>
            <person name="Phillips C.A."/>
            <person name="Spriggs T."/>
            <person name="Hedblom E."/>
            <person name="Cotton M.D."/>
            <person name="Utterback T.R."/>
            <person name="Hanna M.C."/>
            <person name="Nguyen D.T."/>
            <person name="Saudek D.M."/>
            <person name="Brandon R.C."/>
            <person name="Fine L.D."/>
            <person name="Fritchman J.L."/>
            <person name="Fuhrmann J.L."/>
            <person name="Geoghagen N.S.M."/>
            <person name="Gnehm C.L."/>
            <person name="McDonald L.A."/>
            <person name="Small K.V."/>
            <person name="Fraser C.M."/>
            <person name="Smith H.O."/>
            <person name="Venter J.C."/>
        </authorList>
    </citation>
    <scope>NUCLEOTIDE SEQUENCE [LARGE SCALE GENOMIC DNA]</scope>
    <source>
        <strain>ATCC 51907 / DSM 11121 / KW20 / Rd</strain>
    </source>
</reference>
<reference key="2">
    <citation type="journal article" date="2000" name="Electrophoresis">
        <title>Two-dimensional map of the proteome of Haemophilus influenzae.</title>
        <authorList>
            <person name="Langen H."/>
            <person name="Takacs B."/>
            <person name="Evers S."/>
            <person name="Berndt P."/>
            <person name="Lahm H.W."/>
            <person name="Wipf B."/>
            <person name="Gray C."/>
            <person name="Fountoulakis M."/>
        </authorList>
    </citation>
    <scope>IDENTIFICATION BY MASS SPECTROMETRY</scope>
    <source>
        <strain>ATCC 51907 / DSM 11121 / KW20 / Rd</strain>
    </source>
</reference>
<protein>
    <recommendedName>
        <fullName evidence="1">Ancillary SecYEG translocon subunit</fullName>
    </recommendedName>
    <alternativeName>
        <fullName evidence="1">Periplasmic chaperone YfgM</fullName>
    </alternativeName>
</protein>
<dbReference type="EMBL" id="L42023">
    <property type="protein sequence ID" value="AAC22028.1"/>
    <property type="molecule type" value="Genomic_DNA"/>
</dbReference>
<dbReference type="PIR" id="G64006">
    <property type="entry name" value="G64006"/>
</dbReference>
<dbReference type="RefSeq" id="NP_438531.1">
    <property type="nucleotide sequence ID" value="NC_000907.1"/>
</dbReference>
<dbReference type="SMR" id="P43989"/>
<dbReference type="STRING" id="71421.HI_0370"/>
<dbReference type="EnsemblBacteria" id="AAC22028">
    <property type="protein sequence ID" value="AAC22028"/>
    <property type="gene ID" value="HI_0370"/>
</dbReference>
<dbReference type="KEGG" id="hin:HI_0370"/>
<dbReference type="PATRIC" id="fig|71421.8.peg.388"/>
<dbReference type="eggNOG" id="COG2976">
    <property type="taxonomic scope" value="Bacteria"/>
</dbReference>
<dbReference type="HOGENOM" id="CLU_084785_0_0_6"/>
<dbReference type="OrthoDB" id="9789675at2"/>
<dbReference type="PhylomeDB" id="P43989"/>
<dbReference type="BioCyc" id="HINF71421:G1GJ1-383-MONOMER"/>
<dbReference type="Proteomes" id="UP000000579">
    <property type="component" value="Chromosome"/>
</dbReference>
<dbReference type="GO" id="GO:0005886">
    <property type="term" value="C:plasma membrane"/>
    <property type="evidence" value="ECO:0007669"/>
    <property type="project" value="UniProtKB-SubCell"/>
</dbReference>
<dbReference type="GO" id="GO:0044877">
    <property type="term" value="F:protein-containing complex binding"/>
    <property type="evidence" value="ECO:0007669"/>
    <property type="project" value="InterPro"/>
</dbReference>
<dbReference type="FunFam" id="1.25.40.10:FF:002641">
    <property type="entry name" value="Membrane anchored protein with DUF2133 domain"/>
    <property type="match status" value="1"/>
</dbReference>
<dbReference type="Gene3D" id="1.25.40.10">
    <property type="entry name" value="Tetratricopeptide repeat domain"/>
    <property type="match status" value="1"/>
</dbReference>
<dbReference type="InterPro" id="IPR018704">
    <property type="entry name" value="SecYEG/CpoB_TPR"/>
</dbReference>
<dbReference type="InterPro" id="IPR011990">
    <property type="entry name" value="TPR-like_helical_dom_sf"/>
</dbReference>
<dbReference type="InterPro" id="IPR026039">
    <property type="entry name" value="YfgM"/>
</dbReference>
<dbReference type="PANTHER" id="PTHR38035:SF1">
    <property type="entry name" value="ANCILLARY SECYEG TRANSLOCON SUBUNIT"/>
    <property type="match status" value="1"/>
</dbReference>
<dbReference type="PANTHER" id="PTHR38035">
    <property type="entry name" value="UPF0070 PROTEIN YFGM"/>
    <property type="match status" value="1"/>
</dbReference>
<dbReference type="Pfam" id="PF09976">
    <property type="entry name" value="TPR_21"/>
    <property type="match status" value="1"/>
</dbReference>
<dbReference type="PIRSF" id="PIRSF006170">
    <property type="entry name" value="YfgM"/>
    <property type="match status" value="1"/>
</dbReference>
<dbReference type="SUPFAM" id="SSF48452">
    <property type="entry name" value="TPR-like"/>
    <property type="match status" value="1"/>
</dbReference>
<name>YFGM_HAEIN</name>
<proteinExistence type="evidence at protein level"/>
<comment type="function">
    <text evidence="1">May mediate protein transfer from the SecYEG translocon to the periplasmic chaperone network via its periplasmic C-terminal region.</text>
</comment>
<comment type="subunit">
    <text evidence="1">Interacts with the SecYEG translocon (By similarity). Forms a complex with PpiD (By similarity).</text>
</comment>
<comment type="subcellular location">
    <subcellularLocation>
        <location evidence="1">Cell inner membrane</location>
        <topology evidence="1">Single-pass type II membrane protein</topology>
        <orientation evidence="1">Periplasmic side</orientation>
    </subcellularLocation>
</comment>
<comment type="similarity">
    <text evidence="3">Belongs to the YfgM family.</text>
</comment>